<reference key="1">
    <citation type="journal article" date="2006" name="BMC Genomics">
        <title>The genome of the square archaeon Haloquadratum walsbyi: life at the limits of water activity.</title>
        <authorList>
            <person name="Bolhuis H."/>
            <person name="Palm P."/>
            <person name="Wende A."/>
            <person name="Falb M."/>
            <person name="Rampp M."/>
            <person name="Rodriguez-Valera F."/>
            <person name="Pfeiffer F."/>
            <person name="Oesterhelt D."/>
        </authorList>
    </citation>
    <scope>NUCLEOTIDE SEQUENCE [LARGE SCALE GENOMIC DNA]</scope>
    <source>
        <strain>DSM 16790 / HBSQ001</strain>
    </source>
</reference>
<dbReference type="EC" id="6.3.5.-" evidence="1"/>
<dbReference type="EMBL" id="AM180088">
    <property type="protein sequence ID" value="CAJ51395.1"/>
    <property type="molecule type" value="Genomic_DNA"/>
</dbReference>
<dbReference type="RefSeq" id="WP_011570556.1">
    <property type="nucleotide sequence ID" value="NC_008212.1"/>
</dbReference>
<dbReference type="SMR" id="Q18KP9"/>
<dbReference type="STRING" id="362976.HQ_1266A"/>
<dbReference type="GeneID" id="4193671"/>
<dbReference type="KEGG" id="hwa:HQ_1266A"/>
<dbReference type="eggNOG" id="arCOG01718">
    <property type="taxonomic scope" value="Archaea"/>
</dbReference>
<dbReference type="HOGENOM" id="CLU_019240_0_0_2"/>
<dbReference type="Proteomes" id="UP000001975">
    <property type="component" value="Chromosome"/>
</dbReference>
<dbReference type="GO" id="GO:0050566">
    <property type="term" value="F:asparaginyl-tRNA synthase (glutamine-hydrolyzing) activity"/>
    <property type="evidence" value="ECO:0007669"/>
    <property type="project" value="RHEA"/>
</dbReference>
<dbReference type="GO" id="GO:0005524">
    <property type="term" value="F:ATP binding"/>
    <property type="evidence" value="ECO:0007669"/>
    <property type="project" value="UniProtKB-KW"/>
</dbReference>
<dbReference type="GO" id="GO:0050567">
    <property type="term" value="F:glutaminyl-tRNA synthase (glutamine-hydrolyzing) activity"/>
    <property type="evidence" value="ECO:0007669"/>
    <property type="project" value="UniProtKB-UniRule"/>
</dbReference>
<dbReference type="GO" id="GO:0070681">
    <property type="term" value="P:glutaminyl-tRNAGln biosynthesis via transamidation"/>
    <property type="evidence" value="ECO:0007669"/>
    <property type="project" value="TreeGrafter"/>
</dbReference>
<dbReference type="GO" id="GO:0006412">
    <property type="term" value="P:translation"/>
    <property type="evidence" value="ECO:0007669"/>
    <property type="project" value="UniProtKB-UniRule"/>
</dbReference>
<dbReference type="FunFam" id="1.10.10.410:FF:000001">
    <property type="entry name" value="Aspartyl/glutamyl-tRNA(Asn/Gln) amidotransferase subunit B"/>
    <property type="match status" value="1"/>
</dbReference>
<dbReference type="Gene3D" id="1.10.10.410">
    <property type="match status" value="1"/>
</dbReference>
<dbReference type="Gene3D" id="1.10.150.380">
    <property type="entry name" value="GatB domain, N-terminal subdomain"/>
    <property type="match status" value="1"/>
</dbReference>
<dbReference type="HAMAP" id="MF_00121">
    <property type="entry name" value="GatB"/>
    <property type="match status" value="1"/>
</dbReference>
<dbReference type="InterPro" id="IPR017959">
    <property type="entry name" value="Asn/Gln-tRNA_amidoTrfase_suB/E"/>
</dbReference>
<dbReference type="InterPro" id="IPR006075">
    <property type="entry name" value="Asn/Gln-tRNA_Trfase_suB/E_cat"/>
</dbReference>
<dbReference type="InterPro" id="IPR018027">
    <property type="entry name" value="Asn/Gln_amidotransferase"/>
</dbReference>
<dbReference type="InterPro" id="IPR003789">
    <property type="entry name" value="Asn/Gln_tRNA_amidoTrase-B-like"/>
</dbReference>
<dbReference type="InterPro" id="IPR004413">
    <property type="entry name" value="GatB"/>
</dbReference>
<dbReference type="InterPro" id="IPR042114">
    <property type="entry name" value="GatB_C_1"/>
</dbReference>
<dbReference type="InterPro" id="IPR023168">
    <property type="entry name" value="GatB_Yqey_C_2"/>
</dbReference>
<dbReference type="InterPro" id="IPR017958">
    <property type="entry name" value="Gln-tRNA_amidoTrfase_suB_CS"/>
</dbReference>
<dbReference type="InterPro" id="IPR014746">
    <property type="entry name" value="Gln_synth/guanido_kin_cat_dom"/>
</dbReference>
<dbReference type="NCBIfam" id="TIGR00133">
    <property type="entry name" value="gatB"/>
    <property type="match status" value="1"/>
</dbReference>
<dbReference type="NCBIfam" id="NF004012">
    <property type="entry name" value="PRK05477.1-2"/>
    <property type="match status" value="1"/>
</dbReference>
<dbReference type="NCBIfam" id="NF004014">
    <property type="entry name" value="PRK05477.1-4"/>
    <property type="match status" value="1"/>
</dbReference>
<dbReference type="PANTHER" id="PTHR11659">
    <property type="entry name" value="GLUTAMYL-TRNA GLN AMIDOTRANSFERASE SUBUNIT B MITOCHONDRIAL AND PROKARYOTIC PET112-RELATED"/>
    <property type="match status" value="1"/>
</dbReference>
<dbReference type="PANTHER" id="PTHR11659:SF0">
    <property type="entry name" value="GLUTAMYL-TRNA(GLN) AMIDOTRANSFERASE SUBUNIT B, MITOCHONDRIAL"/>
    <property type="match status" value="1"/>
</dbReference>
<dbReference type="Pfam" id="PF02934">
    <property type="entry name" value="GatB_N"/>
    <property type="match status" value="1"/>
</dbReference>
<dbReference type="Pfam" id="PF02637">
    <property type="entry name" value="GatB_Yqey"/>
    <property type="match status" value="1"/>
</dbReference>
<dbReference type="SMART" id="SM00845">
    <property type="entry name" value="GatB_Yqey"/>
    <property type="match status" value="1"/>
</dbReference>
<dbReference type="SUPFAM" id="SSF89095">
    <property type="entry name" value="GatB/YqeY motif"/>
    <property type="match status" value="1"/>
</dbReference>
<dbReference type="SUPFAM" id="SSF55931">
    <property type="entry name" value="Glutamine synthetase/guanido kinase"/>
    <property type="match status" value="1"/>
</dbReference>
<dbReference type="PROSITE" id="PS01234">
    <property type="entry name" value="GATB"/>
    <property type="match status" value="1"/>
</dbReference>
<organism>
    <name type="scientific">Haloquadratum walsbyi (strain DSM 16790 / HBSQ001)</name>
    <dbReference type="NCBI Taxonomy" id="362976"/>
    <lineage>
        <taxon>Archaea</taxon>
        <taxon>Methanobacteriati</taxon>
        <taxon>Methanobacteriota</taxon>
        <taxon>Stenosarchaea group</taxon>
        <taxon>Halobacteria</taxon>
        <taxon>Halobacteriales</taxon>
        <taxon>Haloferacaceae</taxon>
        <taxon>Haloquadratum</taxon>
    </lineage>
</organism>
<keyword id="KW-0067">ATP-binding</keyword>
<keyword id="KW-0436">Ligase</keyword>
<keyword id="KW-0547">Nucleotide-binding</keyword>
<keyword id="KW-0648">Protein biosynthesis</keyword>
<keyword id="KW-1185">Reference proteome</keyword>
<comment type="function">
    <text evidence="1">Allows the formation of correctly charged Asn-tRNA(Asn) or Gln-tRNA(Gln) through the transamidation of misacylated Asp-tRNA(Asn) or Glu-tRNA(Gln) in organisms which lack either or both of asparaginyl-tRNA or glutaminyl-tRNA synthetases. The reaction takes place in the presence of glutamine and ATP through an activated phospho-Asp-tRNA(Asn) or phospho-Glu-tRNA(Gln).</text>
</comment>
<comment type="catalytic activity">
    <reaction evidence="1">
        <text>L-glutamyl-tRNA(Gln) + L-glutamine + ATP + H2O = L-glutaminyl-tRNA(Gln) + L-glutamate + ADP + phosphate + H(+)</text>
        <dbReference type="Rhea" id="RHEA:17521"/>
        <dbReference type="Rhea" id="RHEA-COMP:9681"/>
        <dbReference type="Rhea" id="RHEA-COMP:9684"/>
        <dbReference type="ChEBI" id="CHEBI:15377"/>
        <dbReference type="ChEBI" id="CHEBI:15378"/>
        <dbReference type="ChEBI" id="CHEBI:29985"/>
        <dbReference type="ChEBI" id="CHEBI:30616"/>
        <dbReference type="ChEBI" id="CHEBI:43474"/>
        <dbReference type="ChEBI" id="CHEBI:58359"/>
        <dbReference type="ChEBI" id="CHEBI:78520"/>
        <dbReference type="ChEBI" id="CHEBI:78521"/>
        <dbReference type="ChEBI" id="CHEBI:456216"/>
    </reaction>
</comment>
<comment type="catalytic activity">
    <reaction evidence="1">
        <text>L-aspartyl-tRNA(Asn) + L-glutamine + ATP + H2O = L-asparaginyl-tRNA(Asn) + L-glutamate + ADP + phosphate + 2 H(+)</text>
        <dbReference type="Rhea" id="RHEA:14513"/>
        <dbReference type="Rhea" id="RHEA-COMP:9674"/>
        <dbReference type="Rhea" id="RHEA-COMP:9677"/>
        <dbReference type="ChEBI" id="CHEBI:15377"/>
        <dbReference type="ChEBI" id="CHEBI:15378"/>
        <dbReference type="ChEBI" id="CHEBI:29985"/>
        <dbReference type="ChEBI" id="CHEBI:30616"/>
        <dbReference type="ChEBI" id="CHEBI:43474"/>
        <dbReference type="ChEBI" id="CHEBI:58359"/>
        <dbReference type="ChEBI" id="CHEBI:78515"/>
        <dbReference type="ChEBI" id="CHEBI:78516"/>
        <dbReference type="ChEBI" id="CHEBI:456216"/>
    </reaction>
</comment>
<comment type="subunit">
    <text evidence="1">Heterotrimer of A, B and C subunits.</text>
</comment>
<comment type="similarity">
    <text evidence="1">Belongs to the GatB/GatE family. GatB subfamily.</text>
</comment>
<evidence type="ECO:0000255" key="1">
    <source>
        <dbReference type="HAMAP-Rule" id="MF_00121"/>
    </source>
</evidence>
<evidence type="ECO:0000256" key="2">
    <source>
        <dbReference type="SAM" id="MobiDB-lite"/>
    </source>
</evidence>
<name>GATB_HALWD</name>
<sequence>MTATALAQRDFTAVIGLEVHVQLETDTKIFCGCSTRDNNAEPNTRTCPVCLGLPGALPVLNKAAVEAAVKVGKALNADIAEKTQFHRKNYYYPDLPKNFQISQYDAPICSDGQLSISVEDNRREVAIRRAHLEEDPGSLTHQGGNIDTAEYTLVDYNRAGTPLMEIVTEPDFRSPAETRAFLNKLEEVLEYLGIFDPTADGSLRVDANISLIPTEDIDNGSITTAALESANRTEVKNISSHKGAEKALAYEVTRQRNAVERGRAIEQETRHWDESRGITVSMRSKEAEKDYRYFPEADLPPLAVADWKDQISIPELPDARRERFREEYKLDSESAAKLTSTKAVADFFESVADQFDPALAATWVADNLLGELNYRDMTVGDIDDRFDEFTQLIELVDDEDITTKNAEEVVLRRMLDDELTPEAVIESEGLGRADEDEVVTAVTGAIDESPEAVEDYHAGEGGAINFLVGQVMQKTGGSADPSKVNTLLREQLEDKK</sequence>
<accession>Q18KP9</accession>
<gene>
    <name evidence="1" type="primary">gatB</name>
    <name type="ordered locus">HQ_1266A</name>
</gene>
<feature type="chain" id="PRO_1000015973" description="Aspartyl/glutamyl-tRNA(Asn/Gln) amidotransferase subunit B">
    <location>
        <begin position="1"/>
        <end position="496"/>
    </location>
</feature>
<feature type="region of interest" description="Disordered" evidence="2">
    <location>
        <begin position="475"/>
        <end position="496"/>
    </location>
</feature>
<proteinExistence type="inferred from homology"/>
<protein>
    <recommendedName>
        <fullName evidence="1">Aspartyl/glutamyl-tRNA(Asn/Gln) amidotransferase subunit B</fullName>
        <shortName evidence="1">Asp/Glu-ADT subunit B</shortName>
        <ecNumber evidence="1">6.3.5.-</ecNumber>
    </recommendedName>
</protein>